<gene>
    <name evidence="1" type="primary">htpX</name>
    <name type="ordered locus">Bamb_3179</name>
</gene>
<name>HTPX_BURCM</name>
<comment type="cofactor">
    <cofactor evidence="1">
        <name>Zn(2+)</name>
        <dbReference type="ChEBI" id="CHEBI:29105"/>
    </cofactor>
    <text evidence="1">Binds 1 zinc ion per subunit.</text>
</comment>
<comment type="subcellular location">
    <subcellularLocation>
        <location evidence="1">Cell inner membrane</location>
        <topology evidence="1">Multi-pass membrane protein</topology>
    </subcellularLocation>
</comment>
<comment type="similarity">
    <text evidence="1">Belongs to the peptidase M48B family.</text>
</comment>
<feature type="chain" id="PRO_1000077450" description="Protease HtpX homolog">
    <location>
        <begin position="1"/>
        <end position="285"/>
    </location>
</feature>
<feature type="transmembrane region" description="Helical" evidence="1">
    <location>
        <begin position="7"/>
        <end position="27"/>
    </location>
</feature>
<feature type="transmembrane region" description="Helical" evidence="1">
    <location>
        <begin position="30"/>
        <end position="50"/>
    </location>
</feature>
<feature type="transmembrane region" description="Helical" evidence="1">
    <location>
        <begin position="146"/>
        <end position="166"/>
    </location>
</feature>
<feature type="transmembrane region" description="Helical" evidence="1">
    <location>
        <begin position="177"/>
        <end position="197"/>
    </location>
</feature>
<feature type="active site" evidence="1">
    <location>
        <position position="132"/>
    </location>
</feature>
<feature type="binding site" evidence="1">
    <location>
        <position position="131"/>
    </location>
    <ligand>
        <name>Zn(2+)</name>
        <dbReference type="ChEBI" id="CHEBI:29105"/>
        <note>catalytic</note>
    </ligand>
</feature>
<feature type="binding site" evidence="1">
    <location>
        <position position="135"/>
    </location>
    <ligand>
        <name>Zn(2+)</name>
        <dbReference type="ChEBI" id="CHEBI:29105"/>
        <note>catalytic</note>
    </ligand>
</feature>
<feature type="binding site" evidence="1">
    <location>
        <position position="202"/>
    </location>
    <ligand>
        <name>Zn(2+)</name>
        <dbReference type="ChEBI" id="CHEBI:29105"/>
        <note>catalytic</note>
    </ligand>
</feature>
<accession>Q0BAT8</accession>
<organism>
    <name type="scientific">Burkholderia ambifaria (strain ATCC BAA-244 / DSM 16087 / CCUG 44356 / LMG 19182 / AMMD)</name>
    <name type="common">Burkholderia cepacia (strain AMMD)</name>
    <dbReference type="NCBI Taxonomy" id="339670"/>
    <lineage>
        <taxon>Bacteria</taxon>
        <taxon>Pseudomonadati</taxon>
        <taxon>Pseudomonadota</taxon>
        <taxon>Betaproteobacteria</taxon>
        <taxon>Burkholderiales</taxon>
        <taxon>Burkholderiaceae</taxon>
        <taxon>Burkholderia</taxon>
        <taxon>Burkholderia cepacia complex</taxon>
    </lineage>
</organism>
<dbReference type="EC" id="3.4.24.-" evidence="1"/>
<dbReference type="EMBL" id="CP000440">
    <property type="protein sequence ID" value="ABI88735.1"/>
    <property type="molecule type" value="Genomic_DNA"/>
</dbReference>
<dbReference type="RefSeq" id="WP_006750073.1">
    <property type="nucleotide sequence ID" value="NZ_CP009798.1"/>
</dbReference>
<dbReference type="GeneID" id="93084628"/>
<dbReference type="KEGG" id="bam:Bamb_3179"/>
<dbReference type="PATRIC" id="fig|339670.21.peg.1680"/>
<dbReference type="eggNOG" id="COG0501">
    <property type="taxonomic scope" value="Bacteria"/>
</dbReference>
<dbReference type="Proteomes" id="UP000000662">
    <property type="component" value="Chromosome 1"/>
</dbReference>
<dbReference type="GO" id="GO:0005886">
    <property type="term" value="C:plasma membrane"/>
    <property type="evidence" value="ECO:0007669"/>
    <property type="project" value="UniProtKB-SubCell"/>
</dbReference>
<dbReference type="GO" id="GO:0004222">
    <property type="term" value="F:metalloendopeptidase activity"/>
    <property type="evidence" value="ECO:0007669"/>
    <property type="project" value="UniProtKB-UniRule"/>
</dbReference>
<dbReference type="GO" id="GO:0008270">
    <property type="term" value="F:zinc ion binding"/>
    <property type="evidence" value="ECO:0007669"/>
    <property type="project" value="UniProtKB-UniRule"/>
</dbReference>
<dbReference type="GO" id="GO:0006508">
    <property type="term" value="P:proteolysis"/>
    <property type="evidence" value="ECO:0007669"/>
    <property type="project" value="UniProtKB-KW"/>
</dbReference>
<dbReference type="CDD" id="cd07336">
    <property type="entry name" value="M48B_HtpX_like"/>
    <property type="match status" value="1"/>
</dbReference>
<dbReference type="Gene3D" id="3.30.2010.10">
    <property type="entry name" value="Metalloproteases ('zincins'), catalytic domain"/>
    <property type="match status" value="1"/>
</dbReference>
<dbReference type="HAMAP" id="MF_00188">
    <property type="entry name" value="Pept_M48_protease_HtpX"/>
    <property type="match status" value="1"/>
</dbReference>
<dbReference type="InterPro" id="IPR050083">
    <property type="entry name" value="HtpX_protease"/>
</dbReference>
<dbReference type="InterPro" id="IPR022919">
    <property type="entry name" value="Pept_M48_protease_HtpX"/>
</dbReference>
<dbReference type="InterPro" id="IPR001915">
    <property type="entry name" value="Peptidase_M48"/>
</dbReference>
<dbReference type="NCBIfam" id="NF002363">
    <property type="entry name" value="PRK01345.1"/>
    <property type="match status" value="1"/>
</dbReference>
<dbReference type="NCBIfam" id="NF002826">
    <property type="entry name" value="PRK03001.1"/>
    <property type="match status" value="1"/>
</dbReference>
<dbReference type="PANTHER" id="PTHR43221">
    <property type="entry name" value="PROTEASE HTPX"/>
    <property type="match status" value="1"/>
</dbReference>
<dbReference type="PANTHER" id="PTHR43221:SF1">
    <property type="entry name" value="PROTEASE HTPX"/>
    <property type="match status" value="1"/>
</dbReference>
<dbReference type="Pfam" id="PF01435">
    <property type="entry name" value="Peptidase_M48"/>
    <property type="match status" value="1"/>
</dbReference>
<sequence>MFNWVKTAMLMAGITALFIVIGGMIGGTRGMTIALLFALAMNFFSYWFSDKMVLRMYNAQEVDENTAPQFYRMVRELATRANLPMPRVYLINEDAPNAFATGRNPEHAAVAATTGILRVLSEREMRGVMAHELAHVKHRDILISTITATMAGAISALANFAMFFGGRDENGRPANPIAGIAVALLAPIAGALIQMAISRAREFEADRGGAQISGDPQSLATALDKIHRYAAGIPFQAAEAHPATAQMMIMNPLHGGGLQNLFSTHPATEERIARLMEMARTGRFD</sequence>
<evidence type="ECO:0000255" key="1">
    <source>
        <dbReference type="HAMAP-Rule" id="MF_00188"/>
    </source>
</evidence>
<proteinExistence type="inferred from homology"/>
<reference key="1">
    <citation type="submission" date="2006-08" db="EMBL/GenBank/DDBJ databases">
        <title>Complete sequence of chromosome 1 of Burkholderia cepacia AMMD.</title>
        <authorList>
            <person name="Copeland A."/>
            <person name="Lucas S."/>
            <person name="Lapidus A."/>
            <person name="Barry K."/>
            <person name="Detter J.C."/>
            <person name="Glavina del Rio T."/>
            <person name="Hammon N."/>
            <person name="Israni S."/>
            <person name="Pitluck S."/>
            <person name="Bruce D."/>
            <person name="Chain P."/>
            <person name="Malfatti S."/>
            <person name="Shin M."/>
            <person name="Vergez L."/>
            <person name="Schmutz J."/>
            <person name="Larimer F."/>
            <person name="Land M."/>
            <person name="Hauser L."/>
            <person name="Kyrpides N."/>
            <person name="Kim E."/>
            <person name="Parke J."/>
            <person name="Coenye T."/>
            <person name="Konstantinidis K."/>
            <person name="Ramette A."/>
            <person name="Tiedje J."/>
            <person name="Richardson P."/>
        </authorList>
    </citation>
    <scope>NUCLEOTIDE SEQUENCE [LARGE SCALE GENOMIC DNA]</scope>
    <source>
        <strain>ATCC BAA-244 / DSM 16087 / CCUG 44356 / LMG 19182 / AMMD</strain>
    </source>
</reference>
<keyword id="KW-0997">Cell inner membrane</keyword>
<keyword id="KW-1003">Cell membrane</keyword>
<keyword id="KW-0378">Hydrolase</keyword>
<keyword id="KW-0472">Membrane</keyword>
<keyword id="KW-0479">Metal-binding</keyword>
<keyword id="KW-0482">Metalloprotease</keyword>
<keyword id="KW-0645">Protease</keyword>
<keyword id="KW-0812">Transmembrane</keyword>
<keyword id="KW-1133">Transmembrane helix</keyword>
<keyword id="KW-0862">Zinc</keyword>
<protein>
    <recommendedName>
        <fullName evidence="1">Protease HtpX homolog</fullName>
        <ecNumber evidence="1">3.4.24.-</ecNumber>
    </recommendedName>
</protein>